<gene>
    <name type="primary">ASK11</name>
    <name type="ordered locus">At4g34210</name>
    <name type="ORF">F10M10.2</name>
</gene>
<organism>
    <name type="scientific">Arabidopsis thaliana</name>
    <name type="common">Mouse-ear cress</name>
    <dbReference type="NCBI Taxonomy" id="3702"/>
    <lineage>
        <taxon>Eukaryota</taxon>
        <taxon>Viridiplantae</taxon>
        <taxon>Streptophyta</taxon>
        <taxon>Embryophyta</taxon>
        <taxon>Tracheophyta</taxon>
        <taxon>Spermatophyta</taxon>
        <taxon>Magnoliopsida</taxon>
        <taxon>eudicotyledons</taxon>
        <taxon>Gunneridae</taxon>
        <taxon>Pentapetalae</taxon>
        <taxon>rosids</taxon>
        <taxon>malvids</taxon>
        <taxon>Brassicales</taxon>
        <taxon>Brassicaceae</taxon>
        <taxon>Camelineae</taxon>
        <taxon>Arabidopsis</taxon>
    </lineage>
</organism>
<protein>
    <recommendedName>
        <fullName>SKP1-like protein 11</fullName>
        <shortName>AtSK11</shortName>
    </recommendedName>
</protein>
<comment type="function">
    <text evidence="1 3">Involved in ubiquitination and subsequent proteasomal degradation of target proteins. Together with CUL1, RBX1 and a F-box protein, it forms a SCF E3 ubiquitin ligase complex. The functional specificity of this complex depends on the type of F-box protein. In the SCF complex, it serves as an adapter that links the F-box protein to CUL1 (By similarity). Plays a role during early flowers reproductive development.</text>
</comment>
<comment type="pathway">
    <text>Protein modification; protein ubiquitination.</text>
</comment>
<comment type="subunit">
    <text evidence="1 2 4 5">Part of a SCF (SKP1-cullin-F-box) protein ligase complex (By similarity). Interacts with ADO3/FKF1, COI1/FBL2, EBF1/FBL6, PP2A13, PP2B10, UFO, SKIP2, SKIP15, SKIP16, SKIP32, CPR1/CPR30, At1g55000, At1g67340, At1g78100, At3g04660, At3g16740, At3g61590, At4g38940 and At5g49610.</text>
</comment>
<comment type="interaction">
    <interactant intactId="EBI-401185">
        <id>O49484</id>
    </interactant>
    <interactant intactId="EBI-300691">
        <id>Q94BT6</id>
        <label>ADO1</label>
    </interactant>
    <organismsDiffer>false</organismsDiffer>
    <experiments>3</experiments>
</comment>
<comment type="interaction">
    <interactant intactId="EBI-401185">
        <id>O49484</id>
    </interactant>
    <interactant intactId="EBI-401198">
        <id>Q9SKK0</id>
        <label>EBF1</label>
    </interactant>
    <organismsDiffer>false</organismsDiffer>
    <experiments>3</experiments>
</comment>
<comment type="interaction">
    <interactant intactId="EBI-401185">
        <id>O49484</id>
    </interactant>
    <interactant intactId="EBI-687388">
        <id>Q8LEA8</id>
        <label>EID1</label>
    </interactant>
    <organismsDiffer>false</organismsDiffer>
    <experiments>3</experiments>
</comment>
<comment type="interaction">
    <interactant intactId="EBI-401185">
        <id>O49484</id>
    </interactant>
    <interactant intactId="EBI-591174">
        <id>O49279</id>
        <label>SKIP15</label>
    </interactant>
    <organismsDiffer>false</organismsDiffer>
    <experiments>3</experiments>
</comment>
<comment type="interaction">
    <interactant intactId="EBI-401185">
        <id>O49484</id>
    </interactant>
    <interactant intactId="EBI-590758">
        <id>Q39090</id>
        <label>UFO</label>
    </interactant>
    <organismsDiffer>false</organismsDiffer>
    <experiments>3</experiments>
</comment>
<comment type="subcellular location">
    <subcellularLocation>
        <location evidence="1">Nucleus</location>
    </subcellularLocation>
</comment>
<comment type="tissue specificity">
    <text evidence="3 4">Expressed in young seedlings, cotyledons, roots, leaves, floral stems, inflorescences, pollen, and siliques, with a slightly higher level in inflorescence than in other tissues.</text>
</comment>
<comment type="developmental stage">
    <text evidence="3">Expressed in the inflorescence meristem (IM) and young buds, particularly in stamen. Also detected in pollen grains.</text>
</comment>
<comment type="similarity">
    <text evidence="6">Belongs to the SKP1 family.</text>
</comment>
<comment type="sequence caution" evidence="6">
    <conflict type="erroneous termination">
        <sequence resource="EMBL-CDS" id="ABK28664"/>
    </conflict>
    <text>Extended C-terminus.</text>
</comment>
<feature type="chain" id="PRO_0000375252" description="SKP1-like protein 11">
    <location>
        <begin position="1"/>
        <end position="152"/>
    </location>
</feature>
<feature type="region of interest" description="Interaction with the F-box domain of F-box proteins" evidence="1">
    <location>
        <begin position="94"/>
        <end position="152"/>
    </location>
</feature>
<dbReference type="EMBL" id="AL021961">
    <property type="protein sequence ID" value="CAA17551.1"/>
    <property type="molecule type" value="Genomic_DNA"/>
</dbReference>
<dbReference type="EMBL" id="AL161585">
    <property type="protein sequence ID" value="CAB80138.1"/>
    <property type="molecule type" value="Genomic_DNA"/>
</dbReference>
<dbReference type="EMBL" id="CP002687">
    <property type="protein sequence ID" value="AEE86340.1"/>
    <property type="molecule type" value="Genomic_DNA"/>
</dbReference>
<dbReference type="EMBL" id="DQ446893">
    <property type="protein sequence ID" value="ABE66110.1"/>
    <property type="molecule type" value="mRNA"/>
</dbReference>
<dbReference type="EMBL" id="DQ653243">
    <property type="protein sequence ID" value="ABK28664.1"/>
    <property type="status" value="ALT_SEQ"/>
    <property type="molecule type" value="mRNA"/>
</dbReference>
<dbReference type="PIR" id="T05415">
    <property type="entry name" value="T05415"/>
</dbReference>
<dbReference type="RefSeq" id="NP_567959.1">
    <property type="nucleotide sequence ID" value="NM_119584.2"/>
</dbReference>
<dbReference type="SMR" id="O49484"/>
<dbReference type="BioGRID" id="14851">
    <property type="interactions" value="92"/>
</dbReference>
<dbReference type="ComplexPortal" id="CPX-1438">
    <property type="entry name" value="SCF(COI1) ubiquitin ligase complex, variant CUL1-RBX1A-ASK11"/>
</dbReference>
<dbReference type="ComplexPortal" id="CPX-1459">
    <property type="entry name" value="SCF(COI1) ubiquitin ligase complex, variant CUL1-RBX1B-ASK11"/>
</dbReference>
<dbReference type="ComplexPortal" id="CPX-1481">
    <property type="entry name" value="SCF(COI1) ubiquitin ligase complex, variant CUL2-RBX1A-ASK11"/>
</dbReference>
<dbReference type="ComplexPortal" id="CPX-1504">
    <property type="entry name" value="SCF(COI1) ubiquitin ligase complex, variant CUL2-RBX1B-ASK11"/>
</dbReference>
<dbReference type="ComplexPortal" id="CPX-1524">
    <property type="entry name" value="SCF(TIR1) ubiquitin ligase complex, variant CUL1-RBX1A-ASK11"/>
</dbReference>
<dbReference type="ComplexPortal" id="CPX-1545">
    <property type="entry name" value="SCF(TIR1) ubiquitin ligase complex, variant CUL1-RBX1B-ASK11"/>
</dbReference>
<dbReference type="ComplexPortal" id="CPX-1567">
    <property type="entry name" value="SCF(TIR1) ubiquitin ligase complex, variant CUL2-RBX1A-ASK11"/>
</dbReference>
<dbReference type="ComplexPortal" id="CPX-1588">
    <property type="entry name" value="SCF(TIR1) ubiquitin ligase complex, variant CUL2-RBX1B-ASK11"/>
</dbReference>
<dbReference type="DIP" id="DIP-31327N"/>
<dbReference type="FunCoup" id="O49484">
    <property type="interactions" value="2568"/>
</dbReference>
<dbReference type="IntAct" id="O49484">
    <property type="interactions" value="38"/>
</dbReference>
<dbReference type="STRING" id="3702.O49484"/>
<dbReference type="iPTMnet" id="O49484"/>
<dbReference type="PaxDb" id="3702-AT4G34210.1"/>
<dbReference type="ProteomicsDB" id="246503"/>
<dbReference type="EnsemblPlants" id="AT4G34210.1">
    <property type="protein sequence ID" value="AT4G34210.1"/>
    <property type="gene ID" value="AT4G34210"/>
</dbReference>
<dbReference type="GeneID" id="829569"/>
<dbReference type="Gramene" id="AT4G34210.1">
    <property type="protein sequence ID" value="AT4G34210.1"/>
    <property type="gene ID" value="AT4G34210"/>
</dbReference>
<dbReference type="KEGG" id="ath:AT4G34210"/>
<dbReference type="Araport" id="AT4G34210"/>
<dbReference type="TAIR" id="AT4G34210">
    <property type="gene designation" value="SK11"/>
</dbReference>
<dbReference type="eggNOG" id="KOG1724">
    <property type="taxonomic scope" value="Eukaryota"/>
</dbReference>
<dbReference type="HOGENOM" id="CLU_059252_6_1_1"/>
<dbReference type="InParanoid" id="O49484"/>
<dbReference type="OMA" id="RLCIRND"/>
<dbReference type="PhylomeDB" id="O49484"/>
<dbReference type="UniPathway" id="UPA00143"/>
<dbReference type="PRO" id="PR:O49484"/>
<dbReference type="Proteomes" id="UP000006548">
    <property type="component" value="Chromosome 4"/>
</dbReference>
<dbReference type="ExpressionAtlas" id="O49484">
    <property type="expression patterns" value="baseline and differential"/>
</dbReference>
<dbReference type="GO" id="GO:0005634">
    <property type="term" value="C:nucleus"/>
    <property type="evidence" value="ECO:0007669"/>
    <property type="project" value="UniProtKB-SubCell"/>
</dbReference>
<dbReference type="GO" id="GO:0019005">
    <property type="term" value="C:SCF ubiquitin ligase complex"/>
    <property type="evidence" value="ECO:0000250"/>
    <property type="project" value="ComplexPortal"/>
</dbReference>
<dbReference type="GO" id="GO:0009734">
    <property type="term" value="P:auxin-activated signaling pathway"/>
    <property type="evidence" value="ECO:0000303"/>
    <property type="project" value="ComplexPortal"/>
</dbReference>
<dbReference type="GO" id="GO:0009867">
    <property type="term" value="P:jasmonic acid mediated signaling pathway"/>
    <property type="evidence" value="ECO:0000315"/>
    <property type="project" value="ComplexPortal"/>
</dbReference>
<dbReference type="GO" id="GO:0016567">
    <property type="term" value="P:protein ubiquitination"/>
    <property type="evidence" value="ECO:0007669"/>
    <property type="project" value="UniProtKB-UniPathway"/>
</dbReference>
<dbReference type="GO" id="GO:0009733">
    <property type="term" value="P:response to auxin"/>
    <property type="evidence" value="ECO:0000303"/>
    <property type="project" value="ComplexPortal"/>
</dbReference>
<dbReference type="GO" id="GO:0009753">
    <property type="term" value="P:response to jasmonic acid"/>
    <property type="evidence" value="ECO:0000315"/>
    <property type="project" value="ComplexPortal"/>
</dbReference>
<dbReference type="GO" id="GO:0006511">
    <property type="term" value="P:ubiquitin-dependent protein catabolic process"/>
    <property type="evidence" value="ECO:0007669"/>
    <property type="project" value="InterPro"/>
</dbReference>
<dbReference type="CDD" id="cd18322">
    <property type="entry name" value="BTB_POZ_SKP1"/>
    <property type="match status" value="1"/>
</dbReference>
<dbReference type="FunFam" id="3.30.710.10:FF:000230">
    <property type="entry name" value="SKP1-like protein 7"/>
    <property type="match status" value="1"/>
</dbReference>
<dbReference type="Gene3D" id="3.30.710.10">
    <property type="entry name" value="Potassium Channel Kv1.1, Chain A"/>
    <property type="match status" value="1"/>
</dbReference>
<dbReference type="InterPro" id="IPR016897">
    <property type="entry name" value="SKP1"/>
</dbReference>
<dbReference type="InterPro" id="IPR001232">
    <property type="entry name" value="SKP1-like"/>
</dbReference>
<dbReference type="InterPro" id="IPR036296">
    <property type="entry name" value="SKP1-like_dim_sf"/>
</dbReference>
<dbReference type="InterPro" id="IPR011333">
    <property type="entry name" value="SKP1/BTB/POZ_sf"/>
</dbReference>
<dbReference type="InterPro" id="IPR016072">
    <property type="entry name" value="Skp1_comp_dimer"/>
</dbReference>
<dbReference type="InterPro" id="IPR016073">
    <property type="entry name" value="Skp1_comp_POZ"/>
</dbReference>
<dbReference type="PANTHER" id="PTHR11165">
    <property type="entry name" value="SKP1"/>
    <property type="match status" value="1"/>
</dbReference>
<dbReference type="Pfam" id="PF01466">
    <property type="entry name" value="Skp1"/>
    <property type="match status" value="1"/>
</dbReference>
<dbReference type="Pfam" id="PF03931">
    <property type="entry name" value="Skp1_POZ"/>
    <property type="match status" value="1"/>
</dbReference>
<dbReference type="PIRSF" id="PIRSF028729">
    <property type="entry name" value="E3_ubiquit_lig_SCF_Skp"/>
    <property type="match status" value="1"/>
</dbReference>
<dbReference type="SMART" id="SM00512">
    <property type="entry name" value="Skp1"/>
    <property type="match status" value="1"/>
</dbReference>
<dbReference type="SUPFAM" id="SSF54695">
    <property type="entry name" value="POZ domain"/>
    <property type="match status" value="1"/>
</dbReference>
<dbReference type="SUPFAM" id="SSF81382">
    <property type="entry name" value="Skp1 dimerisation domain-like"/>
    <property type="match status" value="1"/>
</dbReference>
<proteinExistence type="evidence at protein level"/>
<sequence>MSSKMIVLMSSDGQSFEVEEAVAIQSQTIAHMVEDDCVADGIPLANVESKILVKVIEYCKKHHVDEANPISEEDLNNWDEKFMDLEQSTIFELILAANYLNIKSLLDLTCQTVADMIKGKTPEEIRSTFNIENDFTPEEEEAVRKENQWAFE</sequence>
<evidence type="ECO:0000250" key="1"/>
<evidence type="ECO:0000269" key="2">
    <source>
    </source>
</evidence>
<evidence type="ECO:0000269" key="3">
    <source>
    </source>
</evidence>
<evidence type="ECO:0000269" key="4">
    <source>
    </source>
</evidence>
<evidence type="ECO:0000269" key="5">
    <source>
    </source>
</evidence>
<evidence type="ECO:0000305" key="6"/>
<keyword id="KW-0539">Nucleus</keyword>
<keyword id="KW-1185">Reference proteome</keyword>
<keyword id="KW-0833">Ubl conjugation pathway</keyword>
<reference key="1">
    <citation type="journal article" date="1999" name="Nature">
        <title>Sequence and analysis of chromosome 4 of the plant Arabidopsis thaliana.</title>
        <authorList>
            <person name="Mayer K.F.X."/>
            <person name="Schueller C."/>
            <person name="Wambutt R."/>
            <person name="Murphy G."/>
            <person name="Volckaert G."/>
            <person name="Pohl T."/>
            <person name="Duesterhoeft A."/>
            <person name="Stiekema W."/>
            <person name="Entian K.-D."/>
            <person name="Terryn N."/>
            <person name="Harris B."/>
            <person name="Ansorge W."/>
            <person name="Brandt P."/>
            <person name="Grivell L.A."/>
            <person name="Rieger M."/>
            <person name="Weichselgartner M."/>
            <person name="de Simone V."/>
            <person name="Obermaier B."/>
            <person name="Mache R."/>
            <person name="Mueller M."/>
            <person name="Kreis M."/>
            <person name="Delseny M."/>
            <person name="Puigdomenech P."/>
            <person name="Watson M."/>
            <person name="Schmidtheini T."/>
            <person name="Reichert B."/>
            <person name="Portetelle D."/>
            <person name="Perez-Alonso M."/>
            <person name="Boutry M."/>
            <person name="Bancroft I."/>
            <person name="Vos P."/>
            <person name="Hoheisel J."/>
            <person name="Zimmermann W."/>
            <person name="Wedler H."/>
            <person name="Ridley P."/>
            <person name="Langham S.-A."/>
            <person name="McCullagh B."/>
            <person name="Bilham L."/>
            <person name="Robben J."/>
            <person name="van der Schueren J."/>
            <person name="Grymonprez B."/>
            <person name="Chuang Y.-J."/>
            <person name="Vandenbussche F."/>
            <person name="Braeken M."/>
            <person name="Weltjens I."/>
            <person name="Voet M."/>
            <person name="Bastiaens I."/>
            <person name="Aert R."/>
            <person name="Defoor E."/>
            <person name="Weitzenegger T."/>
            <person name="Bothe G."/>
            <person name="Ramsperger U."/>
            <person name="Hilbert H."/>
            <person name="Braun M."/>
            <person name="Holzer E."/>
            <person name="Brandt A."/>
            <person name="Peters S."/>
            <person name="van Staveren M."/>
            <person name="Dirkse W."/>
            <person name="Mooijman P."/>
            <person name="Klein Lankhorst R."/>
            <person name="Rose M."/>
            <person name="Hauf J."/>
            <person name="Koetter P."/>
            <person name="Berneiser S."/>
            <person name="Hempel S."/>
            <person name="Feldpausch M."/>
            <person name="Lamberth S."/>
            <person name="Van den Daele H."/>
            <person name="De Keyser A."/>
            <person name="Buysshaert C."/>
            <person name="Gielen J."/>
            <person name="Villarroel R."/>
            <person name="De Clercq R."/>
            <person name="van Montagu M."/>
            <person name="Rogers J."/>
            <person name="Cronin A."/>
            <person name="Quail M.A."/>
            <person name="Bray-Allen S."/>
            <person name="Clark L."/>
            <person name="Doggett J."/>
            <person name="Hall S."/>
            <person name="Kay M."/>
            <person name="Lennard N."/>
            <person name="McLay K."/>
            <person name="Mayes R."/>
            <person name="Pettett A."/>
            <person name="Rajandream M.A."/>
            <person name="Lyne M."/>
            <person name="Benes V."/>
            <person name="Rechmann S."/>
            <person name="Borkova D."/>
            <person name="Bloecker H."/>
            <person name="Scharfe M."/>
            <person name="Grimm M."/>
            <person name="Loehnert T.-H."/>
            <person name="Dose S."/>
            <person name="de Haan M."/>
            <person name="Maarse A.C."/>
            <person name="Schaefer M."/>
            <person name="Mueller-Auer S."/>
            <person name="Gabel C."/>
            <person name="Fuchs M."/>
            <person name="Fartmann B."/>
            <person name="Granderath K."/>
            <person name="Dauner D."/>
            <person name="Herzl A."/>
            <person name="Neumann S."/>
            <person name="Argiriou A."/>
            <person name="Vitale D."/>
            <person name="Liguori R."/>
            <person name="Piravandi E."/>
            <person name="Massenet O."/>
            <person name="Quigley F."/>
            <person name="Clabauld G."/>
            <person name="Muendlein A."/>
            <person name="Felber R."/>
            <person name="Schnabl S."/>
            <person name="Hiller R."/>
            <person name="Schmidt W."/>
            <person name="Lecharny A."/>
            <person name="Aubourg S."/>
            <person name="Chefdor F."/>
            <person name="Cooke R."/>
            <person name="Berger C."/>
            <person name="Monfort A."/>
            <person name="Casacuberta E."/>
            <person name="Gibbons T."/>
            <person name="Weber N."/>
            <person name="Vandenbol M."/>
            <person name="Bargues M."/>
            <person name="Terol J."/>
            <person name="Torres A."/>
            <person name="Perez-Perez A."/>
            <person name="Purnelle B."/>
            <person name="Bent E."/>
            <person name="Johnson S."/>
            <person name="Tacon D."/>
            <person name="Jesse T."/>
            <person name="Heijnen L."/>
            <person name="Schwarz S."/>
            <person name="Scholler P."/>
            <person name="Heber S."/>
            <person name="Francs P."/>
            <person name="Bielke C."/>
            <person name="Frishman D."/>
            <person name="Haase D."/>
            <person name="Lemcke K."/>
            <person name="Mewes H.-W."/>
            <person name="Stocker S."/>
            <person name="Zaccaria P."/>
            <person name="Bevan M."/>
            <person name="Wilson R.K."/>
            <person name="de la Bastide M."/>
            <person name="Habermann K."/>
            <person name="Parnell L."/>
            <person name="Dedhia N."/>
            <person name="Gnoj L."/>
            <person name="Schutz K."/>
            <person name="Huang E."/>
            <person name="Spiegel L."/>
            <person name="Sekhon M."/>
            <person name="Murray J."/>
            <person name="Sheet P."/>
            <person name="Cordes M."/>
            <person name="Abu-Threideh J."/>
            <person name="Stoneking T."/>
            <person name="Kalicki J."/>
            <person name="Graves T."/>
            <person name="Harmon G."/>
            <person name="Edwards J."/>
            <person name="Latreille P."/>
            <person name="Courtney L."/>
            <person name="Cloud J."/>
            <person name="Abbott A."/>
            <person name="Scott K."/>
            <person name="Johnson D."/>
            <person name="Minx P."/>
            <person name="Bentley D."/>
            <person name="Fulton B."/>
            <person name="Miller N."/>
            <person name="Greco T."/>
            <person name="Kemp K."/>
            <person name="Kramer J."/>
            <person name="Fulton L."/>
            <person name="Mardis E."/>
            <person name="Dante M."/>
            <person name="Pepin K."/>
            <person name="Hillier L.W."/>
            <person name="Nelson J."/>
            <person name="Spieth J."/>
            <person name="Ryan E."/>
            <person name="Andrews S."/>
            <person name="Geisel C."/>
            <person name="Layman D."/>
            <person name="Du H."/>
            <person name="Ali J."/>
            <person name="Berghoff A."/>
            <person name="Jones K."/>
            <person name="Drone K."/>
            <person name="Cotton M."/>
            <person name="Joshu C."/>
            <person name="Antonoiu B."/>
            <person name="Zidanic M."/>
            <person name="Strong C."/>
            <person name="Sun H."/>
            <person name="Lamar B."/>
            <person name="Yordan C."/>
            <person name="Ma P."/>
            <person name="Zhong J."/>
            <person name="Preston R."/>
            <person name="Vil D."/>
            <person name="Shekher M."/>
            <person name="Matero A."/>
            <person name="Shah R."/>
            <person name="Swaby I.K."/>
            <person name="O'Shaughnessy A."/>
            <person name="Rodriguez M."/>
            <person name="Hoffman J."/>
            <person name="Till S."/>
            <person name="Granat S."/>
            <person name="Shohdy N."/>
            <person name="Hasegawa A."/>
            <person name="Hameed A."/>
            <person name="Lodhi M."/>
            <person name="Johnson A."/>
            <person name="Chen E."/>
            <person name="Marra M.A."/>
            <person name="Martienssen R."/>
            <person name="McCombie W.R."/>
        </authorList>
    </citation>
    <scope>NUCLEOTIDE SEQUENCE [LARGE SCALE GENOMIC DNA]</scope>
    <source>
        <strain>cv. Columbia</strain>
    </source>
</reference>
<reference key="2">
    <citation type="journal article" date="2017" name="Plant J.">
        <title>Araport11: a complete reannotation of the Arabidopsis thaliana reference genome.</title>
        <authorList>
            <person name="Cheng C.Y."/>
            <person name="Krishnakumar V."/>
            <person name="Chan A.P."/>
            <person name="Thibaud-Nissen F."/>
            <person name="Schobel S."/>
            <person name="Town C.D."/>
        </authorList>
    </citation>
    <scope>GENOME REANNOTATION</scope>
    <source>
        <strain>cv. Columbia</strain>
    </source>
</reference>
<reference key="3">
    <citation type="journal article" date="2006" name="Plant Biotechnol. J.">
        <title>Simultaneous high-throughput recombinational cloning of open reading frames in closed and open configurations.</title>
        <authorList>
            <person name="Underwood B.A."/>
            <person name="Vanderhaeghen R."/>
            <person name="Whitford R."/>
            <person name="Town C.D."/>
            <person name="Hilson P."/>
        </authorList>
    </citation>
    <scope>NUCLEOTIDE SEQUENCE [LARGE SCALE MRNA]</scope>
    <source>
        <strain>cv. Columbia</strain>
    </source>
</reference>
<reference key="4">
    <citation type="journal article" date="2002" name="Proc. Natl. Acad. Sci. U.S.A.">
        <title>The F-box subunit of the SCF E3 complex is encoded by a diverse superfamily of genes in Arabidopsis.</title>
        <authorList>
            <person name="Gagne J.M."/>
            <person name="Downes B.P."/>
            <person name="Shiu S.-H."/>
            <person name="Durski A.M."/>
            <person name="Vierstra R.D."/>
        </authorList>
    </citation>
    <scope>INTERACTION WITH UFO; PP2A13; AT1G67340; AT4G38940; SKIP15; AT3G16740; AT3G04660; AT1G78100; AT1G55000; SKIP16; SKIP2; SKIP32 AND EBF1</scope>
</reference>
<reference key="5">
    <citation type="journal article" date="2003" name="Plant Physiol.">
        <title>Members of the Arabidopsis-SKP1-like gene family exhibit a variety of expression patterns and may play diverse roles in Arabidopsis.</title>
        <authorList>
            <person name="Zhao D."/>
            <person name="Ni W."/>
            <person name="Feng B."/>
            <person name="Han T."/>
            <person name="Petrasek M.G."/>
            <person name="Ma H."/>
        </authorList>
    </citation>
    <scope>FUNCTION</scope>
    <scope>GENE FAMILY</scope>
    <scope>NOMENCLATURE</scope>
    <scope>TISSUE SPECIFICITY</scope>
    <scope>DEVELOPMENTAL STAGE</scope>
</reference>
<reference key="6">
    <citation type="journal article" date="2004" name="Plant Cell Physiol.">
        <title>Expression and interaction analysis of Arabidopsis Skp1-related genes.</title>
        <authorList>
            <person name="Takahashi N."/>
            <person name="Kuroda H."/>
            <person name="Kuromori T."/>
            <person name="Hirayama T."/>
            <person name="Seki M."/>
            <person name="Shinozaki K."/>
            <person name="Shimada H."/>
            <person name="Matsui M."/>
        </authorList>
    </citation>
    <scope>TISSUE SPECIFICITY</scope>
    <scope>INTERACTION WITH EBF1/FBL6; COI1/FBL2; ADO3/FKF1; PP2B10; AT3G61590 AND AT5G49610</scope>
</reference>
<reference key="7">
    <citation type="journal article" date="2009" name="Plant J.">
        <title>An F-box gene, CPR30, functions as a negative regulator of the defense response in Arabidopsis.</title>
        <authorList>
            <person name="Gou M."/>
            <person name="Su N."/>
            <person name="Zheng J."/>
            <person name="Huai J."/>
            <person name="Wu G."/>
            <person name="Zhao J."/>
            <person name="He J."/>
            <person name="Tang D."/>
            <person name="Yang S."/>
            <person name="Wang G."/>
        </authorList>
    </citation>
    <scope>INTERACTION WITH CPR1/CPR30</scope>
</reference>
<name>ASK11_ARATH</name>
<accession>O49484</accession>
<accession>A0MFB7</accession>